<reference key="1">
    <citation type="journal article" date="2004" name="Mol. Phylogenet. Evol.">
        <title>Phylogeny of Panax using chloroplast trnC-trnD intergenic region and the utility of trnC-trnD in interspecific studies of plants.</title>
        <authorList>
            <person name="Lee C."/>
            <person name="Wen J."/>
        </authorList>
    </citation>
    <scope>NUCLEOTIDE SEQUENCE [GENOMIC DNA]</scope>
</reference>
<reference key="2">
    <citation type="journal article" date="2004" name="DNA Res.">
        <title>Complete chloroplast genome sequence from Korea ginseng (Panax schinseng Nees) and comparative analysis of sequence evolution among 17 vascular plants.</title>
        <authorList>
            <person name="Kim K.-J."/>
            <person name="Lee H.-L."/>
        </authorList>
    </citation>
    <scope>NUCLEOTIDE SEQUENCE [LARGE SCALE GENOMIC DNA]</scope>
</reference>
<protein>
    <recommendedName>
        <fullName evidence="1">Photosystem II reaction center protein M</fullName>
        <shortName evidence="1">PSII-M</shortName>
    </recommendedName>
</protein>
<accession>Q7YNW2</accession>
<keyword id="KW-0150">Chloroplast</keyword>
<keyword id="KW-0472">Membrane</keyword>
<keyword id="KW-0602">Photosynthesis</keyword>
<keyword id="KW-0604">Photosystem II</keyword>
<keyword id="KW-0934">Plastid</keyword>
<keyword id="KW-0674">Reaction center</keyword>
<keyword id="KW-0793">Thylakoid</keyword>
<keyword id="KW-0812">Transmembrane</keyword>
<keyword id="KW-1133">Transmembrane helix</keyword>
<comment type="function">
    <text evidence="1">One of the components of the core complex of photosystem II (PSII). PSII is a light-driven water:plastoquinone oxidoreductase that uses light energy to abstract electrons from H(2)O, generating O(2) and a proton gradient subsequently used for ATP formation. It consists of a core antenna complex that captures photons, and an electron transfer chain that converts photonic excitation into a charge separation. This subunit is found at the monomer-monomer interface.</text>
</comment>
<comment type="subunit">
    <text evidence="1">PSII is composed of 1 copy each of membrane proteins PsbA, PsbB, PsbC, PsbD, PsbE, PsbF, PsbH, PsbI, PsbJ, PsbK, PsbL, PsbM, PsbT, PsbX, PsbY, PsbZ, Psb30/Ycf12, at least 3 peripheral proteins of the oxygen-evolving complex and a large number of cofactors. It forms dimeric complexes.</text>
</comment>
<comment type="subcellular location">
    <subcellularLocation>
        <location evidence="1">Plastid</location>
        <location evidence="1">Chloroplast thylakoid membrane</location>
        <topology evidence="1">Single-pass membrane protein</topology>
    </subcellularLocation>
</comment>
<comment type="similarity">
    <text evidence="1">Belongs to the PsbM family.</text>
</comment>
<gene>
    <name evidence="1" type="primary">psbM</name>
    <name type="ORF">PSC0309</name>
</gene>
<geneLocation type="chloroplast"/>
<name>PSBM_PANGI</name>
<organism>
    <name type="scientific">Panax ginseng</name>
    <name type="common">Korean ginseng</name>
    <dbReference type="NCBI Taxonomy" id="4054"/>
    <lineage>
        <taxon>Eukaryota</taxon>
        <taxon>Viridiplantae</taxon>
        <taxon>Streptophyta</taxon>
        <taxon>Embryophyta</taxon>
        <taxon>Tracheophyta</taxon>
        <taxon>Spermatophyta</taxon>
        <taxon>Magnoliopsida</taxon>
        <taxon>eudicotyledons</taxon>
        <taxon>Gunneridae</taxon>
        <taxon>Pentapetalae</taxon>
        <taxon>asterids</taxon>
        <taxon>campanulids</taxon>
        <taxon>Apiales</taxon>
        <taxon>Araliaceae</taxon>
        <taxon>Panax</taxon>
    </lineage>
</organism>
<proteinExistence type="inferred from homology"/>
<feature type="chain" id="PRO_0000217567" description="Photosystem II reaction center protein M">
    <location>
        <begin position="1"/>
        <end position="36"/>
    </location>
</feature>
<feature type="transmembrane region" description="Helical" evidence="1">
    <location>
        <begin position="5"/>
        <end position="25"/>
    </location>
</feature>
<dbReference type="EMBL" id="AY275926">
    <property type="protein sequence ID" value="AAP34504.1"/>
    <property type="molecule type" value="Genomic_DNA"/>
</dbReference>
<dbReference type="EMBL" id="AY582139">
    <property type="protein sequence ID" value="AAT98503.1"/>
    <property type="molecule type" value="Genomic_DNA"/>
</dbReference>
<dbReference type="RefSeq" id="YP_086960.1">
    <property type="nucleotide sequence ID" value="NC_006290.1"/>
</dbReference>
<dbReference type="SMR" id="Q7YNW2"/>
<dbReference type="GeneID" id="3021498"/>
<dbReference type="GO" id="GO:0009535">
    <property type="term" value="C:chloroplast thylakoid membrane"/>
    <property type="evidence" value="ECO:0007669"/>
    <property type="project" value="UniProtKB-SubCell"/>
</dbReference>
<dbReference type="GO" id="GO:0009523">
    <property type="term" value="C:photosystem II"/>
    <property type="evidence" value="ECO:0007669"/>
    <property type="project" value="UniProtKB-KW"/>
</dbReference>
<dbReference type="GO" id="GO:0019684">
    <property type="term" value="P:photosynthesis, light reaction"/>
    <property type="evidence" value="ECO:0007669"/>
    <property type="project" value="InterPro"/>
</dbReference>
<dbReference type="HAMAP" id="MF_00438">
    <property type="entry name" value="PSII_PsbM"/>
    <property type="match status" value="1"/>
</dbReference>
<dbReference type="InterPro" id="IPR007826">
    <property type="entry name" value="PSII_PsbM"/>
</dbReference>
<dbReference type="InterPro" id="IPR037269">
    <property type="entry name" value="PSII_PsbM_sf"/>
</dbReference>
<dbReference type="NCBIfam" id="TIGR03038">
    <property type="entry name" value="PS_II_psbM"/>
    <property type="match status" value="1"/>
</dbReference>
<dbReference type="PANTHER" id="PTHR35774">
    <property type="entry name" value="PHOTOSYSTEM II REACTION CENTER PROTEIN M"/>
    <property type="match status" value="1"/>
</dbReference>
<dbReference type="PANTHER" id="PTHR35774:SF1">
    <property type="entry name" value="PHOTOSYSTEM II REACTION CENTER PROTEIN M"/>
    <property type="match status" value="1"/>
</dbReference>
<dbReference type="Pfam" id="PF05151">
    <property type="entry name" value="PsbM"/>
    <property type="match status" value="1"/>
</dbReference>
<dbReference type="SUPFAM" id="SSF161033">
    <property type="entry name" value="Photosystem II reaction center protein M, PsbM"/>
    <property type="match status" value="1"/>
</dbReference>
<evidence type="ECO:0000255" key="1">
    <source>
        <dbReference type="HAMAP-Rule" id="MF_00438"/>
    </source>
</evidence>
<sequence>MEVNILAFIATALFILVPTAFLLIIYVKTESQNKKN</sequence>